<dbReference type="EC" id="3.5.1.88" evidence="1"/>
<dbReference type="EMBL" id="CP000480">
    <property type="protein sequence ID" value="ABK72853.1"/>
    <property type="molecule type" value="Genomic_DNA"/>
</dbReference>
<dbReference type="EMBL" id="CP001663">
    <property type="protein sequence ID" value="AFP37293.1"/>
    <property type="molecule type" value="Genomic_DNA"/>
</dbReference>
<dbReference type="RefSeq" id="WP_011727226.1">
    <property type="nucleotide sequence ID" value="NZ_SIJM01000010.1"/>
</dbReference>
<dbReference type="RefSeq" id="YP_885236.1">
    <property type="nucleotide sequence ID" value="NC_008596.1"/>
</dbReference>
<dbReference type="SMR" id="A0QQP8"/>
<dbReference type="STRING" id="246196.MSMEG_0832"/>
<dbReference type="PaxDb" id="246196-MSMEI_0813"/>
<dbReference type="KEGG" id="msb:LJ00_04140"/>
<dbReference type="KEGG" id="msg:MSMEI_0813"/>
<dbReference type="KEGG" id="msm:MSMEG_0832"/>
<dbReference type="PATRIC" id="fig|246196.19.peg.825"/>
<dbReference type="eggNOG" id="COG0242">
    <property type="taxonomic scope" value="Bacteria"/>
</dbReference>
<dbReference type="OrthoDB" id="9804313at2"/>
<dbReference type="Proteomes" id="UP000000757">
    <property type="component" value="Chromosome"/>
</dbReference>
<dbReference type="Proteomes" id="UP000006158">
    <property type="component" value="Chromosome"/>
</dbReference>
<dbReference type="GO" id="GO:0046872">
    <property type="term" value="F:metal ion binding"/>
    <property type="evidence" value="ECO:0007669"/>
    <property type="project" value="UniProtKB-KW"/>
</dbReference>
<dbReference type="GO" id="GO:0042586">
    <property type="term" value="F:peptide deformylase activity"/>
    <property type="evidence" value="ECO:0007669"/>
    <property type="project" value="UniProtKB-UniRule"/>
</dbReference>
<dbReference type="GO" id="GO:0043686">
    <property type="term" value="P:co-translational protein modification"/>
    <property type="evidence" value="ECO:0007669"/>
    <property type="project" value="TreeGrafter"/>
</dbReference>
<dbReference type="GO" id="GO:0006412">
    <property type="term" value="P:translation"/>
    <property type="evidence" value="ECO:0007669"/>
    <property type="project" value="UniProtKB-UniRule"/>
</dbReference>
<dbReference type="CDD" id="cd00487">
    <property type="entry name" value="Pep_deformylase"/>
    <property type="match status" value="1"/>
</dbReference>
<dbReference type="Gene3D" id="3.90.45.10">
    <property type="entry name" value="Peptide deformylase"/>
    <property type="match status" value="1"/>
</dbReference>
<dbReference type="HAMAP" id="MF_00163">
    <property type="entry name" value="Pep_deformylase"/>
    <property type="match status" value="1"/>
</dbReference>
<dbReference type="InterPro" id="IPR023635">
    <property type="entry name" value="Peptide_deformylase"/>
</dbReference>
<dbReference type="InterPro" id="IPR036821">
    <property type="entry name" value="Peptide_deformylase_sf"/>
</dbReference>
<dbReference type="NCBIfam" id="TIGR00079">
    <property type="entry name" value="pept_deformyl"/>
    <property type="match status" value="1"/>
</dbReference>
<dbReference type="NCBIfam" id="NF001159">
    <property type="entry name" value="PRK00150.1-3"/>
    <property type="match status" value="1"/>
</dbReference>
<dbReference type="NCBIfam" id="NF009483">
    <property type="entry name" value="PRK12846.1-4"/>
    <property type="match status" value="1"/>
</dbReference>
<dbReference type="PANTHER" id="PTHR10458">
    <property type="entry name" value="PEPTIDE DEFORMYLASE"/>
    <property type="match status" value="1"/>
</dbReference>
<dbReference type="PANTHER" id="PTHR10458:SF2">
    <property type="entry name" value="PEPTIDE DEFORMYLASE, MITOCHONDRIAL"/>
    <property type="match status" value="1"/>
</dbReference>
<dbReference type="Pfam" id="PF01327">
    <property type="entry name" value="Pep_deformylase"/>
    <property type="match status" value="1"/>
</dbReference>
<dbReference type="PIRSF" id="PIRSF004749">
    <property type="entry name" value="Pep_def"/>
    <property type="match status" value="1"/>
</dbReference>
<dbReference type="PRINTS" id="PR01576">
    <property type="entry name" value="PDEFORMYLASE"/>
</dbReference>
<dbReference type="SUPFAM" id="SSF56420">
    <property type="entry name" value="Peptide deformylase"/>
    <property type="match status" value="1"/>
</dbReference>
<evidence type="ECO:0000255" key="1">
    <source>
        <dbReference type="HAMAP-Rule" id="MF_00163"/>
    </source>
</evidence>
<feature type="chain" id="PRO_0000301059" description="Peptide deformylase">
    <location>
        <begin position="1"/>
        <end position="197"/>
    </location>
</feature>
<feature type="active site" evidence="1">
    <location>
        <position position="149"/>
    </location>
</feature>
<feature type="binding site" evidence="1">
    <location>
        <position position="106"/>
    </location>
    <ligand>
        <name>Fe cation</name>
        <dbReference type="ChEBI" id="CHEBI:24875"/>
    </ligand>
</feature>
<feature type="binding site" evidence="1">
    <location>
        <position position="148"/>
    </location>
    <ligand>
        <name>Fe cation</name>
        <dbReference type="ChEBI" id="CHEBI:24875"/>
    </ligand>
</feature>
<feature type="binding site" evidence="1">
    <location>
        <position position="152"/>
    </location>
    <ligand>
        <name>Fe cation</name>
        <dbReference type="ChEBI" id="CHEBI:24875"/>
    </ligand>
</feature>
<protein>
    <recommendedName>
        <fullName evidence="1">Peptide deformylase</fullName>
        <shortName evidence="1">PDF</shortName>
        <ecNumber evidence="1">3.5.1.88</ecNumber>
    </recommendedName>
    <alternativeName>
        <fullName evidence="1">Polypeptide deformylase</fullName>
    </alternativeName>
</protein>
<accession>A0QQP8</accession>
<accession>I7FEH2</accession>
<organism>
    <name type="scientific">Mycolicibacterium smegmatis (strain ATCC 700084 / mc(2)155)</name>
    <name type="common">Mycobacterium smegmatis</name>
    <dbReference type="NCBI Taxonomy" id="246196"/>
    <lineage>
        <taxon>Bacteria</taxon>
        <taxon>Bacillati</taxon>
        <taxon>Actinomycetota</taxon>
        <taxon>Actinomycetes</taxon>
        <taxon>Mycobacteriales</taxon>
        <taxon>Mycobacteriaceae</taxon>
        <taxon>Mycolicibacterium</taxon>
    </lineage>
</organism>
<name>DEF_MYCS2</name>
<comment type="function">
    <text evidence="1">Removes the formyl group from the N-terminal Met of newly synthesized proteins. Requires at least a dipeptide for an efficient rate of reaction. N-terminal L-methionine is a prerequisite for activity but the enzyme has broad specificity at other positions.</text>
</comment>
<comment type="catalytic activity">
    <reaction evidence="1">
        <text>N-terminal N-formyl-L-methionyl-[peptide] + H2O = N-terminal L-methionyl-[peptide] + formate</text>
        <dbReference type="Rhea" id="RHEA:24420"/>
        <dbReference type="Rhea" id="RHEA-COMP:10639"/>
        <dbReference type="Rhea" id="RHEA-COMP:10640"/>
        <dbReference type="ChEBI" id="CHEBI:15377"/>
        <dbReference type="ChEBI" id="CHEBI:15740"/>
        <dbReference type="ChEBI" id="CHEBI:49298"/>
        <dbReference type="ChEBI" id="CHEBI:64731"/>
        <dbReference type="EC" id="3.5.1.88"/>
    </reaction>
</comment>
<comment type="cofactor">
    <cofactor evidence="1">
        <name>Fe(2+)</name>
        <dbReference type="ChEBI" id="CHEBI:29033"/>
    </cofactor>
    <text evidence="1">Binds 1 Fe(2+) ion.</text>
</comment>
<comment type="similarity">
    <text evidence="1">Belongs to the polypeptide deformylase family.</text>
</comment>
<sequence length="197" mass="21208">MAVVPIRIVGDPVLHTPTEPVPVGPDGSLPDDLPALIQDMFDTMDAANGVGLAANQIGVAKRLFVYDCAPTRGQTTRRRGVVINPVLETSEVPETMPDPDEDEEGCLSVPGENFPTGRADWARVTGLDADGSPITLEGEDLFARMLQHETGHLDGFLYLDRLVGRYARAAKKAVKRNGWGVPGLSWMPGEVPDPFGH</sequence>
<reference key="1">
    <citation type="submission" date="2006-10" db="EMBL/GenBank/DDBJ databases">
        <authorList>
            <person name="Fleischmann R.D."/>
            <person name="Dodson R.J."/>
            <person name="Haft D.H."/>
            <person name="Merkel J.S."/>
            <person name="Nelson W.C."/>
            <person name="Fraser C.M."/>
        </authorList>
    </citation>
    <scope>NUCLEOTIDE SEQUENCE [LARGE SCALE GENOMIC DNA]</scope>
    <source>
        <strain>ATCC 700084 / mc(2)155</strain>
    </source>
</reference>
<reference key="2">
    <citation type="journal article" date="2007" name="Genome Biol.">
        <title>Interrupted coding sequences in Mycobacterium smegmatis: authentic mutations or sequencing errors?</title>
        <authorList>
            <person name="Deshayes C."/>
            <person name="Perrodou E."/>
            <person name="Gallien S."/>
            <person name="Euphrasie D."/>
            <person name="Schaeffer C."/>
            <person name="Van-Dorsselaer A."/>
            <person name="Poch O."/>
            <person name="Lecompte O."/>
            <person name="Reyrat J.-M."/>
        </authorList>
    </citation>
    <scope>NUCLEOTIDE SEQUENCE [LARGE SCALE GENOMIC DNA]</scope>
    <source>
        <strain>ATCC 700084 / mc(2)155</strain>
    </source>
</reference>
<reference key="3">
    <citation type="journal article" date="2009" name="Genome Res.">
        <title>Ortho-proteogenomics: multiple proteomes investigation through orthology and a new MS-based protocol.</title>
        <authorList>
            <person name="Gallien S."/>
            <person name="Perrodou E."/>
            <person name="Carapito C."/>
            <person name="Deshayes C."/>
            <person name="Reyrat J.-M."/>
            <person name="Van Dorsselaer A."/>
            <person name="Poch O."/>
            <person name="Schaeffer C."/>
            <person name="Lecompte O."/>
        </authorList>
    </citation>
    <scope>NUCLEOTIDE SEQUENCE [LARGE SCALE GENOMIC DNA]</scope>
    <source>
        <strain>ATCC 700084 / mc(2)155</strain>
    </source>
</reference>
<gene>
    <name evidence="1" type="primary">def</name>
    <name type="ordered locus">MSMEG_0832</name>
    <name type="ordered locus">MSMEI_0813</name>
</gene>
<proteinExistence type="inferred from homology"/>
<keyword id="KW-0378">Hydrolase</keyword>
<keyword id="KW-0408">Iron</keyword>
<keyword id="KW-0479">Metal-binding</keyword>
<keyword id="KW-0648">Protein biosynthesis</keyword>
<keyword id="KW-1185">Reference proteome</keyword>